<accession>C3NE30</accession>
<comment type="function">
    <text evidence="1">Catalyzes the reversible conversion of 2-phosphoglycerate (2-PG) into phosphoenolpyruvate (PEP). It is essential for the degradation of carbohydrates via glycolysis.</text>
</comment>
<comment type="catalytic activity">
    <reaction evidence="1">
        <text>(2R)-2-phosphoglycerate = phosphoenolpyruvate + H2O</text>
        <dbReference type="Rhea" id="RHEA:10164"/>
        <dbReference type="ChEBI" id="CHEBI:15377"/>
        <dbReference type="ChEBI" id="CHEBI:58289"/>
        <dbReference type="ChEBI" id="CHEBI:58702"/>
        <dbReference type="EC" id="4.2.1.11"/>
    </reaction>
</comment>
<comment type="cofactor">
    <cofactor evidence="1">
        <name>Mg(2+)</name>
        <dbReference type="ChEBI" id="CHEBI:18420"/>
    </cofactor>
    <text evidence="1">Binds a second Mg(2+) ion via substrate during catalysis.</text>
</comment>
<comment type="pathway">
    <text evidence="1">Carbohydrate degradation; glycolysis; pyruvate from D-glyceraldehyde 3-phosphate: step 4/5.</text>
</comment>
<comment type="subcellular location">
    <subcellularLocation>
        <location evidence="1">Cytoplasm</location>
    </subcellularLocation>
    <subcellularLocation>
        <location evidence="1">Secreted</location>
    </subcellularLocation>
    <subcellularLocation>
        <location evidence="1">Cell surface</location>
    </subcellularLocation>
    <text evidence="1">Fractions of enolase are present in both the cytoplasm and on the cell surface.</text>
</comment>
<comment type="similarity">
    <text evidence="1">Belongs to the enolase family.</text>
</comment>
<name>ENO_SACI7</name>
<reference key="1">
    <citation type="journal article" date="2009" name="Proc. Natl. Acad. Sci. U.S.A.">
        <title>Biogeography of the Sulfolobus islandicus pan-genome.</title>
        <authorList>
            <person name="Reno M.L."/>
            <person name="Held N.L."/>
            <person name="Fields C.J."/>
            <person name="Burke P.V."/>
            <person name="Whitaker R.J."/>
        </authorList>
    </citation>
    <scope>NUCLEOTIDE SEQUENCE [LARGE SCALE GENOMIC DNA]</scope>
    <source>
        <strain>Y.G.57.14 / Yellowstone #1</strain>
    </source>
</reference>
<sequence length="419" mass="46668">MINRFSIEKVKGLEIIDSRGNPTIRVFVRTNDGVESFGDAPAGASKGTREAIEVRDENGLTVKRAVDIANYIIDPALHGIDVREQGIIDKILIDIDSTENKSKLGGNTIIATSIAALKTSSKALGLEVFKYIAGPRLPKIPIPLLNIINGGLHAGNKLKIQEFIILPIKFNTFKEAFFAAIEVYRNLKGLISERYGKIYTAVGDEGGFSPPLEETREALDLIYTSINNAGYQGKIYMGMDAAASDFYDPKKEKYIIDGKELNPTQLLEFYLDLAKEYPIVYLEDPFEENSFDMFGELQNKLNSTIVTGDDLYTTNIKYLKIGIEKRSTKGVIVKPNQVGTISETFEFTNLARRNSIKLVTSHRSGETEDNFIAEFAVGIESDFIKTGAPARGERTSKYNKLLEIENKFGLEYGGKYFYL</sequence>
<organism>
    <name type="scientific">Saccharolobus islandicus (strain Y.G.57.14 / Yellowstone #1)</name>
    <name type="common">Sulfolobus islandicus</name>
    <dbReference type="NCBI Taxonomy" id="439386"/>
    <lineage>
        <taxon>Archaea</taxon>
        <taxon>Thermoproteota</taxon>
        <taxon>Thermoprotei</taxon>
        <taxon>Sulfolobales</taxon>
        <taxon>Sulfolobaceae</taxon>
        <taxon>Saccharolobus</taxon>
    </lineage>
</organism>
<proteinExistence type="inferred from homology"/>
<gene>
    <name evidence="1" type="primary">eno</name>
    <name type="ordered locus">YG5714_1302</name>
</gene>
<keyword id="KW-0963">Cytoplasm</keyword>
<keyword id="KW-0324">Glycolysis</keyword>
<keyword id="KW-0456">Lyase</keyword>
<keyword id="KW-0460">Magnesium</keyword>
<keyword id="KW-0479">Metal-binding</keyword>
<keyword id="KW-0964">Secreted</keyword>
<dbReference type="EC" id="4.2.1.11" evidence="1"/>
<dbReference type="EMBL" id="CP001403">
    <property type="protein sequence ID" value="ACP45569.1"/>
    <property type="molecule type" value="Genomic_DNA"/>
</dbReference>
<dbReference type="RefSeq" id="WP_012716147.1">
    <property type="nucleotide sequence ID" value="NC_012622.1"/>
</dbReference>
<dbReference type="SMR" id="C3NE30"/>
<dbReference type="GeneID" id="7807532"/>
<dbReference type="KEGG" id="siy:YG5714_1302"/>
<dbReference type="HOGENOM" id="CLU_031223_2_1_2"/>
<dbReference type="UniPathway" id="UPA00109">
    <property type="reaction ID" value="UER00187"/>
</dbReference>
<dbReference type="Proteomes" id="UP000002308">
    <property type="component" value="Chromosome"/>
</dbReference>
<dbReference type="GO" id="GO:0009986">
    <property type="term" value="C:cell surface"/>
    <property type="evidence" value="ECO:0007669"/>
    <property type="project" value="UniProtKB-SubCell"/>
</dbReference>
<dbReference type="GO" id="GO:0005576">
    <property type="term" value="C:extracellular region"/>
    <property type="evidence" value="ECO:0007669"/>
    <property type="project" value="UniProtKB-SubCell"/>
</dbReference>
<dbReference type="GO" id="GO:0000015">
    <property type="term" value="C:phosphopyruvate hydratase complex"/>
    <property type="evidence" value="ECO:0007669"/>
    <property type="project" value="InterPro"/>
</dbReference>
<dbReference type="GO" id="GO:0000287">
    <property type="term" value="F:magnesium ion binding"/>
    <property type="evidence" value="ECO:0007669"/>
    <property type="project" value="UniProtKB-UniRule"/>
</dbReference>
<dbReference type="GO" id="GO:0004634">
    <property type="term" value="F:phosphopyruvate hydratase activity"/>
    <property type="evidence" value="ECO:0007669"/>
    <property type="project" value="UniProtKB-UniRule"/>
</dbReference>
<dbReference type="GO" id="GO:0006096">
    <property type="term" value="P:glycolytic process"/>
    <property type="evidence" value="ECO:0007669"/>
    <property type="project" value="UniProtKB-UniRule"/>
</dbReference>
<dbReference type="CDD" id="cd03313">
    <property type="entry name" value="enolase"/>
    <property type="match status" value="1"/>
</dbReference>
<dbReference type="Gene3D" id="3.20.20.120">
    <property type="entry name" value="Enolase-like C-terminal domain"/>
    <property type="match status" value="1"/>
</dbReference>
<dbReference type="Gene3D" id="3.30.390.10">
    <property type="entry name" value="Enolase-like, N-terminal domain"/>
    <property type="match status" value="1"/>
</dbReference>
<dbReference type="HAMAP" id="MF_00318">
    <property type="entry name" value="Enolase"/>
    <property type="match status" value="1"/>
</dbReference>
<dbReference type="InterPro" id="IPR000941">
    <property type="entry name" value="Enolase"/>
</dbReference>
<dbReference type="InterPro" id="IPR036849">
    <property type="entry name" value="Enolase-like_C_sf"/>
</dbReference>
<dbReference type="InterPro" id="IPR029017">
    <property type="entry name" value="Enolase-like_N"/>
</dbReference>
<dbReference type="InterPro" id="IPR020810">
    <property type="entry name" value="Enolase_C"/>
</dbReference>
<dbReference type="InterPro" id="IPR020809">
    <property type="entry name" value="Enolase_CS"/>
</dbReference>
<dbReference type="InterPro" id="IPR020811">
    <property type="entry name" value="Enolase_N"/>
</dbReference>
<dbReference type="NCBIfam" id="TIGR01060">
    <property type="entry name" value="eno"/>
    <property type="match status" value="1"/>
</dbReference>
<dbReference type="PANTHER" id="PTHR11902">
    <property type="entry name" value="ENOLASE"/>
    <property type="match status" value="1"/>
</dbReference>
<dbReference type="PANTHER" id="PTHR11902:SF1">
    <property type="entry name" value="ENOLASE"/>
    <property type="match status" value="1"/>
</dbReference>
<dbReference type="Pfam" id="PF00113">
    <property type="entry name" value="Enolase_C"/>
    <property type="match status" value="1"/>
</dbReference>
<dbReference type="Pfam" id="PF03952">
    <property type="entry name" value="Enolase_N"/>
    <property type="match status" value="1"/>
</dbReference>
<dbReference type="PIRSF" id="PIRSF001400">
    <property type="entry name" value="Enolase"/>
    <property type="match status" value="1"/>
</dbReference>
<dbReference type="PRINTS" id="PR00148">
    <property type="entry name" value="ENOLASE"/>
</dbReference>
<dbReference type="SFLD" id="SFLDF00002">
    <property type="entry name" value="enolase"/>
    <property type="match status" value="1"/>
</dbReference>
<dbReference type="SFLD" id="SFLDG00178">
    <property type="entry name" value="enolase"/>
    <property type="match status" value="1"/>
</dbReference>
<dbReference type="SMART" id="SM01192">
    <property type="entry name" value="Enolase_C"/>
    <property type="match status" value="1"/>
</dbReference>
<dbReference type="SMART" id="SM01193">
    <property type="entry name" value="Enolase_N"/>
    <property type="match status" value="1"/>
</dbReference>
<dbReference type="SUPFAM" id="SSF51604">
    <property type="entry name" value="Enolase C-terminal domain-like"/>
    <property type="match status" value="1"/>
</dbReference>
<dbReference type="SUPFAM" id="SSF54826">
    <property type="entry name" value="Enolase N-terminal domain-like"/>
    <property type="match status" value="1"/>
</dbReference>
<dbReference type="PROSITE" id="PS00164">
    <property type="entry name" value="ENOLASE"/>
    <property type="match status" value="1"/>
</dbReference>
<evidence type="ECO:0000255" key="1">
    <source>
        <dbReference type="HAMAP-Rule" id="MF_00318"/>
    </source>
</evidence>
<protein>
    <recommendedName>
        <fullName evidence="1">Enolase</fullName>
        <ecNumber evidence="1">4.2.1.11</ecNumber>
    </recommendedName>
    <alternativeName>
        <fullName evidence="1">2-phospho-D-glycerate hydro-lyase</fullName>
    </alternativeName>
    <alternativeName>
        <fullName evidence="1">2-phosphoglycerate dehydratase</fullName>
    </alternativeName>
</protein>
<feature type="chain" id="PRO_1000205109" description="Enolase">
    <location>
        <begin position="1"/>
        <end position="419"/>
    </location>
</feature>
<feature type="active site" description="Proton donor" evidence="1">
    <location>
        <position position="205"/>
    </location>
</feature>
<feature type="active site" description="Proton acceptor" evidence="1">
    <location>
        <position position="334"/>
    </location>
</feature>
<feature type="binding site" evidence="1">
    <location>
        <position position="161"/>
    </location>
    <ligand>
        <name>(2R)-2-phosphoglycerate</name>
        <dbReference type="ChEBI" id="CHEBI:58289"/>
    </ligand>
</feature>
<feature type="binding site" evidence="1">
    <location>
        <position position="240"/>
    </location>
    <ligand>
        <name>Mg(2+)</name>
        <dbReference type="ChEBI" id="CHEBI:18420"/>
    </ligand>
</feature>
<feature type="binding site" evidence="1">
    <location>
        <position position="283"/>
    </location>
    <ligand>
        <name>Mg(2+)</name>
        <dbReference type="ChEBI" id="CHEBI:18420"/>
    </ligand>
</feature>
<feature type="binding site" evidence="1">
    <location>
        <position position="309"/>
    </location>
    <ligand>
        <name>Mg(2+)</name>
        <dbReference type="ChEBI" id="CHEBI:18420"/>
    </ligand>
</feature>
<feature type="binding site" evidence="1">
    <location>
        <position position="334"/>
    </location>
    <ligand>
        <name>(2R)-2-phosphoglycerate</name>
        <dbReference type="ChEBI" id="CHEBI:58289"/>
    </ligand>
</feature>
<feature type="binding site" evidence="1">
    <location>
        <position position="363"/>
    </location>
    <ligand>
        <name>(2R)-2-phosphoglycerate</name>
        <dbReference type="ChEBI" id="CHEBI:58289"/>
    </ligand>
</feature>
<feature type="binding site" evidence="1">
    <location>
        <position position="364"/>
    </location>
    <ligand>
        <name>(2R)-2-phosphoglycerate</name>
        <dbReference type="ChEBI" id="CHEBI:58289"/>
    </ligand>
</feature>
<feature type="binding site" evidence="1">
    <location>
        <position position="385"/>
    </location>
    <ligand>
        <name>(2R)-2-phosphoglycerate</name>
        <dbReference type="ChEBI" id="CHEBI:58289"/>
    </ligand>
</feature>